<feature type="chain" id="PRO_1000065952" description="Orotidine 5'-phosphate decarboxylase">
    <location>
        <begin position="1"/>
        <end position="230"/>
    </location>
</feature>
<feature type="active site" description="Proton donor" evidence="1">
    <location>
        <position position="63"/>
    </location>
</feature>
<feature type="binding site" evidence="1">
    <location>
        <position position="11"/>
    </location>
    <ligand>
        <name>substrate</name>
    </ligand>
</feature>
<feature type="binding site" evidence="1">
    <location>
        <position position="34"/>
    </location>
    <ligand>
        <name>substrate</name>
    </ligand>
</feature>
<feature type="binding site" evidence="1">
    <location>
        <begin position="61"/>
        <end position="70"/>
    </location>
    <ligand>
        <name>substrate</name>
    </ligand>
</feature>
<feature type="binding site" evidence="1">
    <location>
        <position position="117"/>
    </location>
    <ligand>
        <name>substrate</name>
    </ligand>
</feature>
<feature type="binding site" evidence="1">
    <location>
        <position position="179"/>
    </location>
    <ligand>
        <name>substrate</name>
    </ligand>
</feature>
<feature type="binding site" evidence="1">
    <location>
        <position position="188"/>
    </location>
    <ligand>
        <name>substrate</name>
    </ligand>
</feature>
<feature type="binding site" evidence="1">
    <location>
        <position position="208"/>
    </location>
    <ligand>
        <name>substrate</name>
    </ligand>
</feature>
<feature type="binding site" evidence="1">
    <location>
        <position position="209"/>
    </location>
    <ligand>
        <name>substrate</name>
    </ligand>
</feature>
<sequence>MREERPIIALDFPSFDDVKDFLEHFPEDEKLYVKIGMEFFYAIGPEIVHYLKGLGHSIFLDLKLHDIPNTVRSAMSVLGTFGIDMVTVHAAGGVEMMSEAKKVLGDKAKLVAVTQLTSTSEEDMRDCQNIQTTVQESVVNYARKAKEAGLDGVVCSAQEVELIKAATADDFLCVTPGIRPAGSEIGDQKRVMTPQEAHQIGSDYIVVGRPIIQAENPWDAYHEIKKQWNS</sequence>
<comment type="function">
    <text evidence="1">Catalyzes the decarboxylation of orotidine 5'-monophosphate (OMP) to uridine 5'-monophosphate (UMP).</text>
</comment>
<comment type="catalytic activity">
    <reaction evidence="1">
        <text>orotidine 5'-phosphate + H(+) = UMP + CO2</text>
        <dbReference type="Rhea" id="RHEA:11596"/>
        <dbReference type="ChEBI" id="CHEBI:15378"/>
        <dbReference type="ChEBI" id="CHEBI:16526"/>
        <dbReference type="ChEBI" id="CHEBI:57538"/>
        <dbReference type="ChEBI" id="CHEBI:57865"/>
        <dbReference type="EC" id="4.1.1.23"/>
    </reaction>
</comment>
<comment type="pathway">
    <text evidence="1">Pyrimidine metabolism; UMP biosynthesis via de novo pathway; UMP from orotate: step 2/2.</text>
</comment>
<comment type="subunit">
    <text evidence="1">Homodimer.</text>
</comment>
<comment type="similarity">
    <text evidence="1">Belongs to the OMP decarboxylase family. Type 1 subfamily.</text>
</comment>
<organism>
    <name type="scientific">Streptococcus sanguinis (strain SK36)</name>
    <dbReference type="NCBI Taxonomy" id="388919"/>
    <lineage>
        <taxon>Bacteria</taxon>
        <taxon>Bacillati</taxon>
        <taxon>Bacillota</taxon>
        <taxon>Bacilli</taxon>
        <taxon>Lactobacillales</taxon>
        <taxon>Streptococcaceae</taxon>
        <taxon>Streptococcus</taxon>
    </lineage>
</organism>
<name>PYRF_STRSV</name>
<keyword id="KW-0210">Decarboxylase</keyword>
<keyword id="KW-0456">Lyase</keyword>
<keyword id="KW-0665">Pyrimidine biosynthesis</keyword>
<keyword id="KW-1185">Reference proteome</keyword>
<proteinExistence type="inferred from homology"/>
<protein>
    <recommendedName>
        <fullName evidence="1">Orotidine 5'-phosphate decarboxylase</fullName>
        <ecNumber evidence="1">4.1.1.23</ecNumber>
    </recommendedName>
    <alternativeName>
        <fullName evidence="1">OMP decarboxylase</fullName>
        <shortName evidence="1">OMPDCase</shortName>
        <shortName evidence="1">OMPdecase</shortName>
    </alternativeName>
</protein>
<gene>
    <name evidence="1" type="primary">pyrF</name>
    <name type="ordered locus">SSA_1241</name>
</gene>
<reference key="1">
    <citation type="journal article" date="2007" name="J. Bacteriol.">
        <title>Genome of the opportunistic pathogen Streptococcus sanguinis.</title>
        <authorList>
            <person name="Xu P."/>
            <person name="Alves J.M."/>
            <person name="Kitten T."/>
            <person name="Brown A."/>
            <person name="Chen Z."/>
            <person name="Ozaki L.S."/>
            <person name="Manque P."/>
            <person name="Ge X."/>
            <person name="Serrano M.G."/>
            <person name="Puiu D."/>
            <person name="Hendricks S."/>
            <person name="Wang Y."/>
            <person name="Chaplin M.D."/>
            <person name="Akan D."/>
            <person name="Paik S."/>
            <person name="Peterson D.L."/>
            <person name="Macrina F.L."/>
            <person name="Buck G.A."/>
        </authorList>
    </citation>
    <scope>NUCLEOTIDE SEQUENCE [LARGE SCALE GENOMIC DNA]</scope>
    <source>
        <strain>SK36</strain>
    </source>
</reference>
<accession>A3CN89</accession>
<evidence type="ECO:0000255" key="1">
    <source>
        <dbReference type="HAMAP-Rule" id="MF_01200"/>
    </source>
</evidence>
<dbReference type="EC" id="4.1.1.23" evidence="1"/>
<dbReference type="EMBL" id="CP000387">
    <property type="protein sequence ID" value="ABN44644.1"/>
    <property type="molecule type" value="Genomic_DNA"/>
</dbReference>
<dbReference type="RefSeq" id="WP_002904555.1">
    <property type="nucleotide sequence ID" value="NZ_CAXTYR010000001.1"/>
</dbReference>
<dbReference type="RefSeq" id="YP_001035194.1">
    <property type="nucleotide sequence ID" value="NC_009009.1"/>
</dbReference>
<dbReference type="SMR" id="A3CN89"/>
<dbReference type="STRING" id="388919.SSA_1241"/>
<dbReference type="KEGG" id="ssa:SSA_1241"/>
<dbReference type="PATRIC" id="fig|388919.9.peg.1181"/>
<dbReference type="eggNOG" id="COG0284">
    <property type="taxonomic scope" value="Bacteria"/>
</dbReference>
<dbReference type="HOGENOM" id="CLU_067069_1_1_9"/>
<dbReference type="OrthoDB" id="9806203at2"/>
<dbReference type="UniPathway" id="UPA00070">
    <property type="reaction ID" value="UER00120"/>
</dbReference>
<dbReference type="Proteomes" id="UP000002148">
    <property type="component" value="Chromosome"/>
</dbReference>
<dbReference type="GO" id="GO:0005829">
    <property type="term" value="C:cytosol"/>
    <property type="evidence" value="ECO:0007669"/>
    <property type="project" value="TreeGrafter"/>
</dbReference>
<dbReference type="GO" id="GO:0004590">
    <property type="term" value="F:orotidine-5'-phosphate decarboxylase activity"/>
    <property type="evidence" value="ECO:0007669"/>
    <property type="project" value="UniProtKB-UniRule"/>
</dbReference>
<dbReference type="GO" id="GO:0006207">
    <property type="term" value="P:'de novo' pyrimidine nucleobase biosynthetic process"/>
    <property type="evidence" value="ECO:0007669"/>
    <property type="project" value="InterPro"/>
</dbReference>
<dbReference type="GO" id="GO:0044205">
    <property type="term" value="P:'de novo' UMP biosynthetic process"/>
    <property type="evidence" value="ECO:0007669"/>
    <property type="project" value="UniProtKB-UniRule"/>
</dbReference>
<dbReference type="CDD" id="cd04725">
    <property type="entry name" value="OMP_decarboxylase_like"/>
    <property type="match status" value="1"/>
</dbReference>
<dbReference type="FunFam" id="3.20.20.70:FF:000015">
    <property type="entry name" value="Orotidine 5'-phosphate decarboxylase"/>
    <property type="match status" value="1"/>
</dbReference>
<dbReference type="Gene3D" id="3.20.20.70">
    <property type="entry name" value="Aldolase class I"/>
    <property type="match status" value="1"/>
</dbReference>
<dbReference type="HAMAP" id="MF_01200_B">
    <property type="entry name" value="OMPdecase_type1_B"/>
    <property type="match status" value="1"/>
</dbReference>
<dbReference type="InterPro" id="IPR013785">
    <property type="entry name" value="Aldolase_TIM"/>
</dbReference>
<dbReference type="InterPro" id="IPR014732">
    <property type="entry name" value="OMPdecase"/>
</dbReference>
<dbReference type="InterPro" id="IPR018089">
    <property type="entry name" value="OMPdecase_AS"/>
</dbReference>
<dbReference type="InterPro" id="IPR047596">
    <property type="entry name" value="OMPdecase_bac"/>
</dbReference>
<dbReference type="InterPro" id="IPR001754">
    <property type="entry name" value="OMPdeCOase_dom"/>
</dbReference>
<dbReference type="InterPro" id="IPR011060">
    <property type="entry name" value="RibuloseP-bd_barrel"/>
</dbReference>
<dbReference type="NCBIfam" id="NF001273">
    <property type="entry name" value="PRK00230.1"/>
    <property type="match status" value="1"/>
</dbReference>
<dbReference type="NCBIfam" id="TIGR01740">
    <property type="entry name" value="pyrF"/>
    <property type="match status" value="1"/>
</dbReference>
<dbReference type="PANTHER" id="PTHR32119">
    <property type="entry name" value="OROTIDINE 5'-PHOSPHATE DECARBOXYLASE"/>
    <property type="match status" value="1"/>
</dbReference>
<dbReference type="PANTHER" id="PTHR32119:SF2">
    <property type="entry name" value="OROTIDINE 5'-PHOSPHATE DECARBOXYLASE"/>
    <property type="match status" value="1"/>
</dbReference>
<dbReference type="Pfam" id="PF00215">
    <property type="entry name" value="OMPdecase"/>
    <property type="match status" value="1"/>
</dbReference>
<dbReference type="SMART" id="SM00934">
    <property type="entry name" value="OMPdecase"/>
    <property type="match status" value="1"/>
</dbReference>
<dbReference type="SUPFAM" id="SSF51366">
    <property type="entry name" value="Ribulose-phoshate binding barrel"/>
    <property type="match status" value="1"/>
</dbReference>
<dbReference type="PROSITE" id="PS00156">
    <property type="entry name" value="OMPDECASE"/>
    <property type="match status" value="1"/>
</dbReference>